<evidence type="ECO:0000255" key="1">
    <source>
        <dbReference type="HAMAP-Rule" id="MF_00270"/>
    </source>
</evidence>
<evidence type="ECO:0000305" key="2"/>
<gene>
    <name evidence="1" type="primary">rpsR</name>
    <name type="ordered locus">CPE2640</name>
</gene>
<reference key="1">
    <citation type="journal article" date="2002" name="Proc. Natl. Acad. Sci. U.S.A.">
        <title>Complete genome sequence of Clostridium perfringens, an anaerobic flesh-eater.</title>
        <authorList>
            <person name="Shimizu T."/>
            <person name="Ohtani K."/>
            <person name="Hirakawa H."/>
            <person name="Ohshima K."/>
            <person name="Yamashita A."/>
            <person name="Shiba T."/>
            <person name="Ogasawara N."/>
            <person name="Hattori M."/>
            <person name="Kuhara S."/>
            <person name="Hayashi H."/>
        </authorList>
    </citation>
    <scope>NUCLEOTIDE SEQUENCE [LARGE SCALE GENOMIC DNA]</scope>
    <source>
        <strain>13 / Type A</strain>
    </source>
</reference>
<accession>Q8XH45</accession>
<comment type="function">
    <text evidence="1">Binds as a heterodimer with protein bS6 to the central domain of the 16S rRNA, where it helps stabilize the platform of the 30S subunit.</text>
</comment>
<comment type="subunit">
    <text evidence="1">Part of the 30S ribosomal subunit. Forms a tight heterodimer with protein bS6.</text>
</comment>
<comment type="similarity">
    <text evidence="1">Belongs to the bacterial ribosomal protein bS18 family.</text>
</comment>
<dbReference type="EMBL" id="BA000016">
    <property type="protein sequence ID" value="BAB82346.1"/>
    <property type="molecule type" value="Genomic_DNA"/>
</dbReference>
<dbReference type="RefSeq" id="WP_003451020.1">
    <property type="nucleotide sequence ID" value="NC_003366.1"/>
</dbReference>
<dbReference type="SMR" id="Q8XH45"/>
<dbReference type="STRING" id="195102.gene:10491984"/>
<dbReference type="GeneID" id="93000745"/>
<dbReference type="KEGG" id="cpe:CPE2640"/>
<dbReference type="HOGENOM" id="CLU_148710_0_3_9"/>
<dbReference type="Proteomes" id="UP000000818">
    <property type="component" value="Chromosome"/>
</dbReference>
<dbReference type="GO" id="GO:0022627">
    <property type="term" value="C:cytosolic small ribosomal subunit"/>
    <property type="evidence" value="ECO:0007669"/>
    <property type="project" value="TreeGrafter"/>
</dbReference>
<dbReference type="GO" id="GO:0070181">
    <property type="term" value="F:small ribosomal subunit rRNA binding"/>
    <property type="evidence" value="ECO:0007669"/>
    <property type="project" value="TreeGrafter"/>
</dbReference>
<dbReference type="GO" id="GO:0003735">
    <property type="term" value="F:structural constituent of ribosome"/>
    <property type="evidence" value="ECO:0007669"/>
    <property type="project" value="InterPro"/>
</dbReference>
<dbReference type="GO" id="GO:0006412">
    <property type="term" value="P:translation"/>
    <property type="evidence" value="ECO:0007669"/>
    <property type="project" value="UniProtKB-UniRule"/>
</dbReference>
<dbReference type="FunFam" id="4.10.640.10:FF:000004">
    <property type="entry name" value="30S ribosomal protein S18"/>
    <property type="match status" value="1"/>
</dbReference>
<dbReference type="Gene3D" id="4.10.640.10">
    <property type="entry name" value="Ribosomal protein S18"/>
    <property type="match status" value="1"/>
</dbReference>
<dbReference type="HAMAP" id="MF_00270">
    <property type="entry name" value="Ribosomal_bS18"/>
    <property type="match status" value="1"/>
</dbReference>
<dbReference type="InterPro" id="IPR001648">
    <property type="entry name" value="Ribosomal_bS18"/>
</dbReference>
<dbReference type="InterPro" id="IPR018275">
    <property type="entry name" value="Ribosomal_bS18_CS"/>
</dbReference>
<dbReference type="InterPro" id="IPR036870">
    <property type="entry name" value="Ribosomal_bS18_sf"/>
</dbReference>
<dbReference type="NCBIfam" id="TIGR00165">
    <property type="entry name" value="S18"/>
    <property type="match status" value="1"/>
</dbReference>
<dbReference type="PANTHER" id="PTHR13479">
    <property type="entry name" value="30S RIBOSOMAL PROTEIN S18"/>
    <property type="match status" value="1"/>
</dbReference>
<dbReference type="PANTHER" id="PTHR13479:SF40">
    <property type="entry name" value="SMALL RIBOSOMAL SUBUNIT PROTEIN BS18M"/>
    <property type="match status" value="1"/>
</dbReference>
<dbReference type="Pfam" id="PF01084">
    <property type="entry name" value="Ribosomal_S18"/>
    <property type="match status" value="1"/>
</dbReference>
<dbReference type="PRINTS" id="PR00974">
    <property type="entry name" value="RIBOSOMALS18"/>
</dbReference>
<dbReference type="SUPFAM" id="SSF46911">
    <property type="entry name" value="Ribosomal protein S18"/>
    <property type="match status" value="1"/>
</dbReference>
<dbReference type="PROSITE" id="PS00057">
    <property type="entry name" value="RIBOSOMAL_S18"/>
    <property type="match status" value="1"/>
</dbReference>
<sequence>MSNVKRGGKFRRARKKVCIFCVDKAESIDYKDVAKLKKYITERGKILPRRISGTCAKHQRQLTDAIKRSRNIALLPFTTE</sequence>
<proteinExistence type="inferred from homology"/>
<keyword id="KW-1185">Reference proteome</keyword>
<keyword id="KW-0687">Ribonucleoprotein</keyword>
<keyword id="KW-0689">Ribosomal protein</keyword>
<keyword id="KW-0694">RNA-binding</keyword>
<keyword id="KW-0699">rRNA-binding</keyword>
<organism>
    <name type="scientific">Clostridium perfringens (strain 13 / Type A)</name>
    <dbReference type="NCBI Taxonomy" id="195102"/>
    <lineage>
        <taxon>Bacteria</taxon>
        <taxon>Bacillati</taxon>
        <taxon>Bacillota</taxon>
        <taxon>Clostridia</taxon>
        <taxon>Eubacteriales</taxon>
        <taxon>Clostridiaceae</taxon>
        <taxon>Clostridium</taxon>
    </lineage>
</organism>
<protein>
    <recommendedName>
        <fullName evidence="1">Small ribosomal subunit protein bS18</fullName>
    </recommendedName>
    <alternativeName>
        <fullName evidence="2">30S ribosomal protein S18</fullName>
    </alternativeName>
</protein>
<feature type="chain" id="PRO_0000111145" description="Small ribosomal subunit protein bS18">
    <location>
        <begin position="1"/>
        <end position="80"/>
    </location>
</feature>
<name>RS18_CLOPE</name>